<name>HOSA_ECO27</name>
<proteinExistence type="evidence at protein level"/>
<reference key="1">
    <citation type="journal article" date="2000" name="J. Bacteriol.">
        <title>Gene conservation and loss in the mutS-rpoS genomic region of pathogenic Escherichia coli.</title>
        <authorList>
            <person name="Herbelin C.J."/>
            <person name="Chirillo S.C."/>
            <person name="Melnick K.A."/>
            <person name="Whittam T.S."/>
        </authorList>
    </citation>
    <scope>NUCLEOTIDE SEQUENCE [GENOMIC DNA]</scope>
</reference>
<reference key="2">
    <citation type="journal article" date="2009" name="J. Bacteriol.">
        <title>Complete genome sequence and comparative genome analysis of enteropathogenic Escherichia coli O127:H6 strain E2348/69.</title>
        <authorList>
            <person name="Iguchi A."/>
            <person name="Thomson N.R."/>
            <person name="Ogura Y."/>
            <person name="Saunders D."/>
            <person name="Ooka T."/>
            <person name="Henderson I.R."/>
            <person name="Harris D."/>
            <person name="Asadulghani M."/>
            <person name="Kurokawa K."/>
            <person name="Dean P."/>
            <person name="Kenny B."/>
            <person name="Quail M.A."/>
            <person name="Thurston S."/>
            <person name="Dougan G."/>
            <person name="Hayashi T."/>
            <person name="Parkhill J."/>
            <person name="Frankel G."/>
        </authorList>
    </citation>
    <scope>NUCLEOTIDE SEQUENCE [LARGE SCALE GENOMIC DNA]</scope>
    <source>
        <strain>E2348/69 / EPEC</strain>
    </source>
</reference>
<reference key="3">
    <citation type="journal article" date="2002" name="Trends Microbiol.">
        <title>Two different open reading frames named slyA in the E. coli sequence databases.</title>
        <authorList>
            <person name="Heroven A.K."/>
            <person name="Dersch P."/>
        </authorList>
    </citation>
    <scope>NOMENCLATURE</scope>
</reference>
<reference key="4">
    <citation type="journal article" date="2005" name="Infect. Immun.">
        <title>HosA, a member of the SlyA family, regulates motility in enteropathogenic Escherichia coli.</title>
        <authorList>
            <person name="Ferrandiz M.-J."/>
            <person name="Bishop K."/>
            <person name="Williams P."/>
            <person name="Withers H."/>
        </authorList>
    </citation>
    <scope>FUNCTION</scope>
</reference>
<accession>P69782</accession>
<accession>B7UHG0</accession>
<accession>Q9EUB1</accession>
<evidence type="ECO:0000255" key="1">
    <source>
        <dbReference type="PROSITE-ProRule" id="PRU00345"/>
    </source>
</evidence>
<evidence type="ECO:0000269" key="2">
    <source>
    </source>
</evidence>
<evidence type="ECO:0000305" key="3"/>
<evidence type="ECO:0007829" key="4">
    <source>
        <dbReference type="PDB" id="8YCV"/>
    </source>
</evidence>
<gene>
    <name type="primary">hosA</name>
    <name type="ordered locus">E2348C_3010</name>
</gene>
<comment type="function">
    <text evidence="2">Involved in the temperature-dependent positive control of flagellum-driven swimming motility and cellular aggregation. Regulates fliC expression by directly interacting with fliC promoter.</text>
</comment>
<comment type="induction">
    <text>Expression is modulated by temperature, growth phase, salt and pH.</text>
</comment>
<comment type="caution">
    <text evidence="3">Originally described as slyA, but then it was found that two distinct genes had been named slyA. This gene was renamed hosA.</text>
</comment>
<protein>
    <recommendedName>
        <fullName>Transcriptional regulator HosA</fullName>
    </recommendedName>
</protein>
<organism>
    <name type="scientific">Escherichia coli O127:H6 (strain E2348/69 / EPEC)</name>
    <dbReference type="NCBI Taxonomy" id="574521"/>
    <lineage>
        <taxon>Bacteria</taxon>
        <taxon>Pseudomonadati</taxon>
        <taxon>Pseudomonadota</taxon>
        <taxon>Gammaproteobacteria</taxon>
        <taxon>Enterobacterales</taxon>
        <taxon>Enterobacteriaceae</taxon>
        <taxon>Escherichia</taxon>
    </lineage>
</organism>
<feature type="chain" id="PRO_0000054357" description="Transcriptional regulator HosA">
    <location>
        <begin position="1"/>
        <end position="135"/>
    </location>
</feature>
<feature type="domain" description="HTH marR-type" evidence="1">
    <location>
        <begin position="4"/>
        <end position="134"/>
    </location>
</feature>
<feature type="DNA-binding region" description="H-T-H motif" evidence="1">
    <location>
        <begin position="48"/>
        <end position="71"/>
    </location>
</feature>
<feature type="helix" evidence="4">
    <location>
        <begin position="3"/>
        <end position="5"/>
    </location>
</feature>
<feature type="helix" evidence="4">
    <location>
        <begin position="7"/>
        <end position="25"/>
    </location>
</feature>
<feature type="helix" evidence="4">
    <location>
        <begin position="31"/>
        <end position="42"/>
    </location>
</feature>
<feature type="helix" evidence="4">
    <location>
        <begin position="48"/>
        <end position="51"/>
    </location>
</feature>
<feature type="helix" evidence="4">
    <location>
        <begin position="52"/>
        <end position="55"/>
    </location>
</feature>
<feature type="helix" evidence="4">
    <location>
        <begin position="59"/>
        <end position="71"/>
    </location>
</feature>
<feature type="strand" evidence="4">
    <location>
        <begin position="74"/>
        <end position="79"/>
    </location>
</feature>
<feature type="strand" evidence="4">
    <location>
        <begin position="86"/>
        <end position="91"/>
    </location>
</feature>
<feature type="helix" evidence="4">
    <location>
        <begin position="93"/>
        <end position="114"/>
    </location>
</feature>
<feature type="helix" evidence="4">
    <location>
        <begin position="119"/>
        <end position="133"/>
    </location>
</feature>
<dbReference type="EMBL" id="AF242211">
    <property type="protein sequence ID" value="AAG14991.1"/>
    <property type="molecule type" value="Genomic_DNA"/>
</dbReference>
<dbReference type="EMBL" id="FM180568">
    <property type="protein sequence ID" value="CAS10558.1"/>
    <property type="molecule type" value="Genomic_DNA"/>
</dbReference>
<dbReference type="RefSeq" id="WP_001208066.1">
    <property type="nucleotide sequence ID" value="NC_011601.1"/>
</dbReference>
<dbReference type="PDB" id="8AGA">
    <property type="method" value="X-ray"/>
    <property type="resolution" value="2.21 A"/>
    <property type="chains" value="A=1-135"/>
</dbReference>
<dbReference type="PDB" id="8PQ4">
    <property type="method" value="X-ray"/>
    <property type="resolution" value="2.25 A"/>
    <property type="chains" value="A=1-135"/>
</dbReference>
<dbReference type="PDB" id="8WSV">
    <property type="method" value="X-ray"/>
    <property type="resolution" value="2.01 A"/>
    <property type="chains" value="A=1-135"/>
</dbReference>
<dbReference type="PDB" id="8XB7">
    <property type="method" value="X-ray"/>
    <property type="resolution" value="2.60 A"/>
    <property type="chains" value="A=1-135"/>
</dbReference>
<dbReference type="PDB" id="8XZU">
    <property type="method" value="X-ray"/>
    <property type="resolution" value="2.33 A"/>
    <property type="chains" value="A=1-135"/>
</dbReference>
<dbReference type="PDB" id="8YCV">
    <property type="method" value="X-ray"/>
    <property type="resolution" value="2.16 A"/>
    <property type="chains" value="A=1-135"/>
</dbReference>
<dbReference type="PDBsum" id="8AGA"/>
<dbReference type="PDBsum" id="8PQ4"/>
<dbReference type="PDBsum" id="8WSV"/>
<dbReference type="PDBsum" id="8XB7"/>
<dbReference type="PDBsum" id="8XZU"/>
<dbReference type="PDBsum" id="8YCV"/>
<dbReference type="SMR" id="P69782"/>
<dbReference type="KEGG" id="ecg:E2348C_3010"/>
<dbReference type="HOGENOM" id="CLU_083287_4_0_6"/>
<dbReference type="Proteomes" id="UP000008205">
    <property type="component" value="Chromosome"/>
</dbReference>
<dbReference type="GO" id="GO:0003677">
    <property type="term" value="F:DNA binding"/>
    <property type="evidence" value="ECO:0007669"/>
    <property type="project" value="UniProtKB-KW"/>
</dbReference>
<dbReference type="GO" id="GO:0003700">
    <property type="term" value="F:DNA-binding transcription factor activity"/>
    <property type="evidence" value="ECO:0007669"/>
    <property type="project" value="InterPro"/>
</dbReference>
<dbReference type="Gene3D" id="1.10.10.10">
    <property type="entry name" value="Winged helix-like DNA-binding domain superfamily/Winged helix DNA-binding domain"/>
    <property type="match status" value="1"/>
</dbReference>
<dbReference type="InterPro" id="IPR000835">
    <property type="entry name" value="HTH_MarR-typ"/>
</dbReference>
<dbReference type="InterPro" id="IPR023187">
    <property type="entry name" value="Tscrpt_reg_MarR-type_CS"/>
</dbReference>
<dbReference type="InterPro" id="IPR036388">
    <property type="entry name" value="WH-like_DNA-bd_sf"/>
</dbReference>
<dbReference type="InterPro" id="IPR036390">
    <property type="entry name" value="WH_DNA-bd_sf"/>
</dbReference>
<dbReference type="PANTHER" id="PTHR42756">
    <property type="entry name" value="TRANSCRIPTIONAL REGULATOR, MARR"/>
    <property type="match status" value="1"/>
</dbReference>
<dbReference type="PANTHER" id="PTHR42756:SF1">
    <property type="entry name" value="TRANSCRIPTIONAL REPRESSOR OF EMRAB OPERON"/>
    <property type="match status" value="1"/>
</dbReference>
<dbReference type="Pfam" id="PF01047">
    <property type="entry name" value="MarR"/>
    <property type="match status" value="1"/>
</dbReference>
<dbReference type="PRINTS" id="PR00598">
    <property type="entry name" value="HTHMARR"/>
</dbReference>
<dbReference type="SMART" id="SM00347">
    <property type="entry name" value="HTH_MARR"/>
    <property type="match status" value="1"/>
</dbReference>
<dbReference type="SUPFAM" id="SSF46785">
    <property type="entry name" value="Winged helix' DNA-binding domain"/>
    <property type="match status" value="1"/>
</dbReference>
<dbReference type="PROSITE" id="PS01117">
    <property type="entry name" value="HTH_MARR_1"/>
    <property type="match status" value="1"/>
</dbReference>
<dbReference type="PROSITE" id="PS50995">
    <property type="entry name" value="HTH_MARR_2"/>
    <property type="match status" value="1"/>
</dbReference>
<keyword id="KW-0002">3D-structure</keyword>
<keyword id="KW-0238">DNA-binding</keyword>
<keyword id="KW-1185">Reference proteome</keyword>
<keyword id="KW-0804">Transcription</keyword>
<keyword id="KW-0805">Transcription regulation</keyword>
<keyword id="KW-0843">Virulence</keyword>
<sequence>MALRNKAFHQLRQLFQQHTARWQHELPDLTKPQYAVMRAIADKPGIEQVALIEAAVSTKATLAEMLARMENRGLVRREHDAADKRRRFVWLTAEGEKVLAAAIPIGDSVDEEFLGRLSAEEQELFMQLVRKMMNT</sequence>